<feature type="chain" id="PRO_0000060844" description="Cytochrome b">
    <location>
        <begin position="1"/>
        <end position="380"/>
    </location>
</feature>
<feature type="transmembrane region" description="Helical" evidence="2">
    <location>
        <begin position="34"/>
        <end position="54"/>
    </location>
</feature>
<feature type="transmembrane region" description="Helical" evidence="2">
    <location>
        <begin position="78"/>
        <end position="99"/>
    </location>
</feature>
<feature type="transmembrane region" description="Helical" evidence="2">
    <location>
        <begin position="114"/>
        <end position="134"/>
    </location>
</feature>
<feature type="transmembrane region" description="Helical" evidence="2">
    <location>
        <begin position="179"/>
        <end position="199"/>
    </location>
</feature>
<feature type="transmembrane region" description="Helical" evidence="2">
    <location>
        <begin position="227"/>
        <end position="247"/>
    </location>
</feature>
<feature type="transmembrane region" description="Helical" evidence="2">
    <location>
        <begin position="289"/>
        <end position="309"/>
    </location>
</feature>
<feature type="transmembrane region" description="Helical" evidence="2">
    <location>
        <begin position="321"/>
        <end position="341"/>
    </location>
</feature>
<feature type="transmembrane region" description="Helical" evidence="2">
    <location>
        <begin position="348"/>
        <end position="368"/>
    </location>
</feature>
<feature type="binding site" description="axial binding residue" evidence="2">
    <location>
        <position position="84"/>
    </location>
    <ligand>
        <name>heme b</name>
        <dbReference type="ChEBI" id="CHEBI:60344"/>
        <label>b562</label>
    </ligand>
    <ligandPart>
        <name>Fe</name>
        <dbReference type="ChEBI" id="CHEBI:18248"/>
    </ligandPart>
</feature>
<feature type="binding site" description="axial binding residue" evidence="2">
    <location>
        <position position="98"/>
    </location>
    <ligand>
        <name>heme b</name>
        <dbReference type="ChEBI" id="CHEBI:60344"/>
        <label>b566</label>
    </ligand>
    <ligandPart>
        <name>Fe</name>
        <dbReference type="ChEBI" id="CHEBI:18248"/>
    </ligandPart>
</feature>
<feature type="binding site" description="axial binding residue" evidence="2">
    <location>
        <position position="183"/>
    </location>
    <ligand>
        <name>heme b</name>
        <dbReference type="ChEBI" id="CHEBI:60344"/>
        <label>b562</label>
    </ligand>
    <ligandPart>
        <name>Fe</name>
        <dbReference type="ChEBI" id="CHEBI:18248"/>
    </ligandPart>
</feature>
<feature type="binding site" description="axial binding residue" evidence="2">
    <location>
        <position position="197"/>
    </location>
    <ligand>
        <name>heme b</name>
        <dbReference type="ChEBI" id="CHEBI:60344"/>
        <label>b566</label>
    </ligand>
    <ligandPart>
        <name>Fe</name>
        <dbReference type="ChEBI" id="CHEBI:18248"/>
    </ligandPart>
</feature>
<feature type="binding site" evidence="2">
    <location>
        <position position="202"/>
    </location>
    <ligand>
        <name>a ubiquinone</name>
        <dbReference type="ChEBI" id="CHEBI:16389"/>
    </ligand>
</feature>
<reference key="1">
    <citation type="journal article" date="1997" name="Condor">
        <title>Intergeneric relationships of the New World jays inferred from cytochrome b gene sequences.</title>
        <authorList>
            <person name="Espinosa de los Monteros A."/>
            <person name="Cracraft J."/>
        </authorList>
    </citation>
    <scope>NUCLEOTIDE SEQUENCE [GENOMIC DNA]</scope>
</reference>
<organism>
    <name type="scientific">Cyanocorax chrysops</name>
    <name type="common">Plush-crested jay</name>
    <name type="synonym">Pica chrysops</name>
    <dbReference type="NCBI Taxonomy" id="54579"/>
    <lineage>
        <taxon>Eukaryota</taxon>
        <taxon>Metazoa</taxon>
        <taxon>Chordata</taxon>
        <taxon>Craniata</taxon>
        <taxon>Vertebrata</taxon>
        <taxon>Euteleostomi</taxon>
        <taxon>Archelosauria</taxon>
        <taxon>Archosauria</taxon>
        <taxon>Dinosauria</taxon>
        <taxon>Saurischia</taxon>
        <taxon>Theropoda</taxon>
        <taxon>Coelurosauria</taxon>
        <taxon>Aves</taxon>
        <taxon>Neognathae</taxon>
        <taxon>Neoaves</taxon>
        <taxon>Telluraves</taxon>
        <taxon>Australaves</taxon>
        <taxon>Passeriformes</taxon>
        <taxon>Corvoidea</taxon>
        <taxon>Corvidae</taxon>
        <taxon>Cyanocorax</taxon>
    </lineage>
</organism>
<keyword id="KW-0249">Electron transport</keyword>
<keyword id="KW-0349">Heme</keyword>
<keyword id="KW-0408">Iron</keyword>
<keyword id="KW-0472">Membrane</keyword>
<keyword id="KW-0479">Metal-binding</keyword>
<keyword id="KW-0496">Mitochondrion</keyword>
<keyword id="KW-0999">Mitochondrion inner membrane</keyword>
<keyword id="KW-0679">Respiratory chain</keyword>
<keyword id="KW-0812">Transmembrane</keyword>
<keyword id="KW-1133">Transmembrane helix</keyword>
<keyword id="KW-0813">Transport</keyword>
<keyword id="KW-0830">Ubiquinone</keyword>
<proteinExistence type="inferred from homology"/>
<geneLocation type="mitochondrion"/>
<gene>
    <name type="primary">MT-CYB</name>
    <name type="synonym">COB</name>
    <name type="synonym">CYTB</name>
    <name type="synonym">MTCYB</name>
</gene>
<sequence>MALNLRKNHPLMKIINDSLIDLPTPSNISAWWYFGYFLGICLITQIITGLLLAMHYTADTSYAFTSVAHMCRNVQFGWLIRNLHANGASLFFVCIYLHIGRGLYYGSYLNKETWNIGVILLLTLMATAFVGYVLPWGQMSFWGATVITNLFSAIPYIGQTLVEWLWGGFSVDNPTLTRFFAFHFLLPFVIVGMTLVHLTFLHETGSNNPLGIPSDCDKIPFHPYYSIKDLLGFALMLILLVTLALFNPNLLGDPENFTPANPLATPPHIKPEWYFLFAYAILRSIPNKLGGVLALAASVLVLFLIPLLHVSKQRSMTFRPLSQILFWTLVADLLILTWVGSQPVEHPFIIIGQLASLAYFTIILILFPIASALENKMLNL</sequence>
<name>CYB_CYACH</name>
<dbReference type="EMBL" id="U77334">
    <property type="protein sequence ID" value="AAB48977.1"/>
    <property type="molecule type" value="Genomic_DNA"/>
</dbReference>
<dbReference type="SMR" id="P92599"/>
<dbReference type="GO" id="GO:0005743">
    <property type="term" value="C:mitochondrial inner membrane"/>
    <property type="evidence" value="ECO:0007669"/>
    <property type="project" value="UniProtKB-SubCell"/>
</dbReference>
<dbReference type="GO" id="GO:0045275">
    <property type="term" value="C:respiratory chain complex III"/>
    <property type="evidence" value="ECO:0007669"/>
    <property type="project" value="InterPro"/>
</dbReference>
<dbReference type="GO" id="GO:0046872">
    <property type="term" value="F:metal ion binding"/>
    <property type="evidence" value="ECO:0007669"/>
    <property type="project" value="UniProtKB-KW"/>
</dbReference>
<dbReference type="GO" id="GO:0008121">
    <property type="term" value="F:ubiquinol-cytochrome-c reductase activity"/>
    <property type="evidence" value="ECO:0007669"/>
    <property type="project" value="InterPro"/>
</dbReference>
<dbReference type="GO" id="GO:0006122">
    <property type="term" value="P:mitochondrial electron transport, ubiquinol to cytochrome c"/>
    <property type="evidence" value="ECO:0007669"/>
    <property type="project" value="TreeGrafter"/>
</dbReference>
<dbReference type="CDD" id="cd00290">
    <property type="entry name" value="cytochrome_b_C"/>
    <property type="match status" value="1"/>
</dbReference>
<dbReference type="CDD" id="cd00284">
    <property type="entry name" value="Cytochrome_b_N"/>
    <property type="match status" value="1"/>
</dbReference>
<dbReference type="FunFam" id="1.20.810.10:FF:000002">
    <property type="entry name" value="Cytochrome b"/>
    <property type="match status" value="1"/>
</dbReference>
<dbReference type="Gene3D" id="1.20.810.10">
    <property type="entry name" value="Cytochrome Bc1 Complex, Chain C"/>
    <property type="match status" value="1"/>
</dbReference>
<dbReference type="InterPro" id="IPR005798">
    <property type="entry name" value="Cyt_b/b6_C"/>
</dbReference>
<dbReference type="InterPro" id="IPR036150">
    <property type="entry name" value="Cyt_b/b6_C_sf"/>
</dbReference>
<dbReference type="InterPro" id="IPR005797">
    <property type="entry name" value="Cyt_b/b6_N"/>
</dbReference>
<dbReference type="InterPro" id="IPR027387">
    <property type="entry name" value="Cytb/b6-like_sf"/>
</dbReference>
<dbReference type="InterPro" id="IPR030689">
    <property type="entry name" value="Cytochrome_b"/>
</dbReference>
<dbReference type="InterPro" id="IPR048260">
    <property type="entry name" value="Cytochrome_b_C_euk/bac"/>
</dbReference>
<dbReference type="InterPro" id="IPR048259">
    <property type="entry name" value="Cytochrome_b_N_euk/bac"/>
</dbReference>
<dbReference type="InterPro" id="IPR016174">
    <property type="entry name" value="Di-haem_cyt_TM"/>
</dbReference>
<dbReference type="PANTHER" id="PTHR19271">
    <property type="entry name" value="CYTOCHROME B"/>
    <property type="match status" value="1"/>
</dbReference>
<dbReference type="PANTHER" id="PTHR19271:SF16">
    <property type="entry name" value="CYTOCHROME B"/>
    <property type="match status" value="1"/>
</dbReference>
<dbReference type="Pfam" id="PF00032">
    <property type="entry name" value="Cytochrom_B_C"/>
    <property type="match status" value="1"/>
</dbReference>
<dbReference type="Pfam" id="PF00033">
    <property type="entry name" value="Cytochrome_B"/>
    <property type="match status" value="1"/>
</dbReference>
<dbReference type="PIRSF" id="PIRSF038885">
    <property type="entry name" value="COB"/>
    <property type="match status" value="1"/>
</dbReference>
<dbReference type="SUPFAM" id="SSF81648">
    <property type="entry name" value="a domain/subunit of cytochrome bc1 complex (Ubiquinol-cytochrome c reductase)"/>
    <property type="match status" value="1"/>
</dbReference>
<dbReference type="SUPFAM" id="SSF81342">
    <property type="entry name" value="Transmembrane di-heme cytochromes"/>
    <property type="match status" value="1"/>
</dbReference>
<dbReference type="PROSITE" id="PS51003">
    <property type="entry name" value="CYTB_CTER"/>
    <property type="match status" value="1"/>
</dbReference>
<dbReference type="PROSITE" id="PS51002">
    <property type="entry name" value="CYTB_NTER"/>
    <property type="match status" value="1"/>
</dbReference>
<accession>P92599</accession>
<evidence type="ECO:0000250" key="1"/>
<evidence type="ECO:0000250" key="2">
    <source>
        <dbReference type="UniProtKB" id="P00157"/>
    </source>
</evidence>
<evidence type="ECO:0000255" key="3">
    <source>
        <dbReference type="PROSITE-ProRule" id="PRU00967"/>
    </source>
</evidence>
<evidence type="ECO:0000255" key="4">
    <source>
        <dbReference type="PROSITE-ProRule" id="PRU00968"/>
    </source>
</evidence>
<comment type="function">
    <text evidence="2">Component of the ubiquinol-cytochrome c reductase complex (complex III or cytochrome b-c1 complex) that is part of the mitochondrial respiratory chain. The b-c1 complex mediates electron transfer from ubiquinol to cytochrome c. Contributes to the generation of a proton gradient across the mitochondrial membrane that is then used for ATP synthesis.</text>
</comment>
<comment type="cofactor">
    <cofactor evidence="2">
        <name>heme b</name>
        <dbReference type="ChEBI" id="CHEBI:60344"/>
    </cofactor>
    <text evidence="2">Binds 2 heme b groups non-covalently.</text>
</comment>
<comment type="subunit">
    <text evidence="2">The cytochrome bc1 complex contains 11 subunits: 3 respiratory subunits (MT-CYB, CYC1 and UQCRFS1), 2 core proteins (UQCRC1 and UQCRC2) and 6 low-molecular weight proteins (UQCRH/QCR6, UQCRB/QCR7, UQCRQ/QCR8, UQCR10/QCR9, UQCR11/QCR10 and a cleavage product of UQCRFS1). This cytochrome bc1 complex then forms a dimer.</text>
</comment>
<comment type="subcellular location">
    <subcellularLocation>
        <location evidence="2">Mitochondrion inner membrane</location>
        <topology evidence="2">Multi-pass membrane protein</topology>
    </subcellularLocation>
</comment>
<comment type="miscellaneous">
    <text evidence="1">Heme 1 (or BL or b562) is low-potential and absorbs at about 562 nm, and heme 2 (or BH or b566) is high-potential and absorbs at about 566 nm.</text>
</comment>
<comment type="similarity">
    <text evidence="3 4">Belongs to the cytochrome b family.</text>
</comment>
<comment type="caution">
    <text evidence="2">The full-length protein contains only eight transmembrane helices, not nine as predicted by bioinformatics tools.</text>
</comment>
<protein>
    <recommendedName>
        <fullName>Cytochrome b</fullName>
    </recommendedName>
    <alternativeName>
        <fullName>Complex III subunit 3</fullName>
    </alternativeName>
    <alternativeName>
        <fullName>Complex III subunit III</fullName>
    </alternativeName>
    <alternativeName>
        <fullName>Cytochrome b-c1 complex subunit 3</fullName>
    </alternativeName>
    <alternativeName>
        <fullName>Ubiquinol-cytochrome-c reductase complex cytochrome b subunit</fullName>
    </alternativeName>
</protein>